<gene>
    <name evidence="1" type="primary">NS</name>
</gene>
<dbReference type="EMBL" id="K00576">
    <property type="protein sequence ID" value="AAA43524.1"/>
    <property type="molecule type" value="Genomic_RNA"/>
</dbReference>
<dbReference type="SMR" id="P03505"/>
<dbReference type="GO" id="GO:0042025">
    <property type="term" value="C:host cell nucleus"/>
    <property type="evidence" value="ECO:0007669"/>
    <property type="project" value="UniProtKB-SubCell"/>
</dbReference>
<dbReference type="GO" id="GO:0044423">
    <property type="term" value="C:virion component"/>
    <property type="evidence" value="ECO:0007669"/>
    <property type="project" value="UniProtKB-UniRule"/>
</dbReference>
<dbReference type="GO" id="GO:0039675">
    <property type="term" value="P:exit of virus from host cell nucleus through nuclear pore"/>
    <property type="evidence" value="ECO:0007669"/>
    <property type="project" value="UniProtKB-UniRule"/>
</dbReference>
<dbReference type="Gene3D" id="1.10.287.230">
    <property type="match status" value="1"/>
</dbReference>
<dbReference type="HAMAP" id="MF_04067">
    <property type="entry name" value="INFV_NEP"/>
    <property type="match status" value="1"/>
</dbReference>
<dbReference type="InterPro" id="IPR000968">
    <property type="entry name" value="Flu_NS2"/>
</dbReference>
<dbReference type="Pfam" id="PF00601">
    <property type="entry name" value="Flu_NS2"/>
    <property type="match status" value="1"/>
</dbReference>
<dbReference type="SUPFAM" id="SSF101156">
    <property type="entry name" value="Nonstructural protein ns2, Nep, M1-binding domain"/>
    <property type="match status" value="1"/>
</dbReference>
<comment type="function">
    <text evidence="1">Mediates the nuclear export of encapsidated genomic RNAs (ribonucleoproteins, RNPs). Acts as an adapter between viral RNPs complexes and the nuclear export machinery of the cell. Possesses no intrinsic RNA-binding activity, but includes a C-terminal M1-binding domain. This domain is believed to allow recognition of RNPs bound to the protein M1. Since protein M1 is not available in large quantities before late stages of infection, such an indirect recognition mechanism probably ensures that genomic RNPs are not exported from the host nucleus until sufficient quantities of viral mRNA and progeny genomic RNA have been synthesized. Furthermore, the RNPs enter the host cytoplasm only when associated with the M1 protein that is necessary to guide them to the plasma membrane. May down-regulate viral RNA synthesis when overproduced.</text>
</comment>
<comment type="subunit">
    <text evidence="1">Interacts with protein M1. May interact with host nucleoporin RAB/HRB and exportin XPO1/CRM1.</text>
</comment>
<comment type="subcellular location">
    <subcellularLocation>
        <location evidence="1">Virion</location>
    </subcellularLocation>
    <subcellularLocation>
        <location evidence="1">Host nucleus</location>
    </subcellularLocation>
</comment>
<comment type="alternative products">
    <event type="alternative splicing"/>
    <isoform>
        <id>P03505-1</id>
        <name>NEP</name>
        <name>NS2</name>
        <sequence type="displayed"/>
    </isoform>
    <isoform>
        <id>P69279-1</id>
        <name>NS1</name>
        <sequence type="external"/>
    </isoform>
</comment>
<comment type="miscellaneous">
    <text>Average number present in a viral particle is estimated to be 130-200 molecules.</text>
</comment>
<comment type="similarity">
    <text evidence="1">Belongs to the influenza viruses NEP family.</text>
</comment>
<protein>
    <recommendedName>
        <fullName evidence="1">Nuclear export protein</fullName>
        <shortName evidence="1">NEP</shortName>
    </recommendedName>
    <alternativeName>
        <fullName evidence="1">Non-structural protein 2</fullName>
        <shortName evidence="1">NS2</shortName>
    </alternativeName>
</protein>
<organism>
    <name type="scientific">Influenza A virus (strain A/Fort Warren/1/1950 H1N1)</name>
    <dbReference type="NCBI Taxonomy" id="384525"/>
    <lineage>
        <taxon>Viruses</taxon>
        <taxon>Riboviria</taxon>
        <taxon>Orthornavirae</taxon>
        <taxon>Negarnaviricota</taxon>
        <taxon>Polyploviricotina</taxon>
        <taxon>Insthoviricetes</taxon>
        <taxon>Articulavirales</taxon>
        <taxon>Orthomyxoviridae</taxon>
        <taxon>Alphainfluenzavirus</taxon>
        <taxon>Alphainfluenzavirus influenzae</taxon>
        <taxon>Influenza A virus</taxon>
    </lineage>
</organism>
<sequence length="121" mass="14434">MDPNTVSSFQDILMRMSKMQLGSSSEDLNGMITQFESLKLYRDSLEEAVMRLGDLHSFQNRNGKWREQLGQKFEEIRWLIEEVRHRLKITENSFEQITFMQALQLLLEVEQEIRTFSFQLI</sequence>
<name>NEP_I50A0</name>
<feature type="chain" id="PRO_0000078986" description="Nuclear export protein">
    <location>
        <begin position="1"/>
        <end position="121"/>
    </location>
</feature>
<feature type="short sequence motif" description="Nuclear export signal" evidence="1">
    <location>
        <begin position="12"/>
        <end position="21"/>
    </location>
</feature>
<feature type="short sequence motif" description="Nuclear export signal" evidence="1">
    <location>
        <begin position="85"/>
        <end position="94"/>
    </location>
</feature>
<keyword id="KW-0025">Alternative splicing</keyword>
<keyword id="KW-1048">Host nucleus</keyword>
<keyword id="KW-0945">Host-virus interaction</keyword>
<keyword id="KW-0813">Transport</keyword>
<keyword id="KW-0946">Virion</keyword>
<reference key="1">
    <citation type="journal article" date="1983" name="J. Virol.">
        <title>Sequential mutations in the NS genes of influenza virus field strains.</title>
        <authorList>
            <person name="Krystal M."/>
            <person name="Buonagurio D.A."/>
            <person name="Young J.F."/>
            <person name="Palese P."/>
        </authorList>
    </citation>
    <scope>NUCLEOTIDE SEQUENCE [GENOMIC RNA]</scope>
</reference>
<accession>P03505</accession>
<organismHost>
    <name type="scientific">Aves</name>
    <dbReference type="NCBI Taxonomy" id="8782"/>
</organismHost>
<organismHost>
    <name type="scientific">Homo sapiens</name>
    <name type="common">Human</name>
    <dbReference type="NCBI Taxonomy" id="9606"/>
</organismHost>
<organismHost>
    <name type="scientific">Sus scrofa</name>
    <name type="common">Pig</name>
    <dbReference type="NCBI Taxonomy" id="9823"/>
</organismHost>
<proteinExistence type="inferred from homology"/>
<evidence type="ECO:0000255" key="1">
    <source>
        <dbReference type="HAMAP-Rule" id="MF_04067"/>
    </source>
</evidence>